<comment type="function">
    <text evidence="1">Mitochondrial GTPase involved in mitochondrial trafficking. Probably involved in control of anterograde transport of mitochondria and their subcellular distribution.</text>
</comment>
<comment type="subcellular location">
    <subcellularLocation>
        <location evidence="1">Mitochondrion outer membrane</location>
        <topology evidence="1">Single-pass type IV membrane protein</topology>
    </subcellularLocation>
</comment>
<comment type="similarity">
    <text evidence="4 5">Belongs to the mitochondrial Rho GTPase family.</text>
</comment>
<gene>
    <name type="primary">GEM1</name>
    <name type="ordered locus">KLLA0A03465g</name>
</gene>
<sequence length="659" mass="74875">MTKTRIRIVVCGDSGVGKTSLIACLVKDQFISWLQDVLPPITIPKDFSSSRYSPENTVVVDTGNSDLATLHKELKNADVIWLVYSDHDSYERIALYWMMMFRSLGVNLPVVLCRNKCDDEVEFLSSANIMDSDDDQLDNKIEDEEFIPILREFKEVETCIKASAKFKFNVNQAFYLCQRTITNPVAPLFDARIGELKPLGVLALKRVFVLSDMDQDGFLNDDEITKLQKKCFSKAVDVNELQFLKDTLTSISSPNQEYEDYILNVPGKGITKDGFLVLNKIYAEKGRHETTWGILRAFHYTDTLTINEKILRPKIDIPQSSSVELSPLGYRFFVDTFLKYDKDNDGGLNNDELHLLFKTTPGLPHLWIETNFPFLTVVNNSACITLQGWLALWSMTTFIDYSVTTEYLIYLGFDKDAKNALQITKPRRKRRRNGVYYRAPVFDRKVLNCYMLGKGNSGKSSLLESFLGRSFSEAYSPTIRPKISVNSLELKGGKQYYLILQELGEQETPILENKGKLDECDVLCLCYDSSDPESFSYIVSLIDKFDYLKELPIVFVALKADLDKQQQRCHIQPDDFADQLFIDHPLHISSTWPSSLNELFIKLTEVALEPITSTAGLGPAVLTNDIDYRQTIVAISSVVGFASLFTFTALKIYSSFKNT</sequence>
<protein>
    <recommendedName>
        <fullName>Mitochondrial Rho GTPase 1</fullName>
        <ecNumber>3.6.5.-</ecNumber>
    </recommendedName>
    <alternativeName>
        <fullName>GTPase EF-hand protein of mitochondria 1</fullName>
    </alternativeName>
</protein>
<organism>
    <name type="scientific">Kluyveromyces lactis (strain ATCC 8585 / CBS 2359 / DSM 70799 / NBRC 1267 / NRRL Y-1140 / WM37)</name>
    <name type="common">Yeast</name>
    <name type="synonym">Candida sphaerica</name>
    <dbReference type="NCBI Taxonomy" id="284590"/>
    <lineage>
        <taxon>Eukaryota</taxon>
        <taxon>Fungi</taxon>
        <taxon>Dikarya</taxon>
        <taxon>Ascomycota</taxon>
        <taxon>Saccharomycotina</taxon>
        <taxon>Saccharomycetes</taxon>
        <taxon>Saccharomycetales</taxon>
        <taxon>Saccharomycetaceae</taxon>
        <taxon>Kluyveromyces</taxon>
    </lineage>
</organism>
<evidence type="ECO:0000250" key="1">
    <source>
        <dbReference type="UniProtKB" id="P39722"/>
    </source>
</evidence>
<evidence type="ECO:0000255" key="2"/>
<evidence type="ECO:0000255" key="3">
    <source>
        <dbReference type="PROSITE-ProRule" id="PRU00448"/>
    </source>
</evidence>
<evidence type="ECO:0000255" key="4">
    <source>
        <dbReference type="PROSITE-ProRule" id="PRU00757"/>
    </source>
</evidence>
<evidence type="ECO:0000305" key="5"/>
<accession>Q6CY37</accession>
<dbReference type="EC" id="3.6.5.-"/>
<dbReference type="EMBL" id="CR382121">
    <property type="protein sequence ID" value="CAH02740.1"/>
    <property type="molecule type" value="Genomic_DNA"/>
</dbReference>
<dbReference type="RefSeq" id="XP_451152.1">
    <property type="nucleotide sequence ID" value="XM_451152.1"/>
</dbReference>
<dbReference type="SMR" id="Q6CY37"/>
<dbReference type="FunCoup" id="Q6CY37">
    <property type="interactions" value="834"/>
</dbReference>
<dbReference type="STRING" id="284590.Q6CY37"/>
<dbReference type="PaxDb" id="284590-Q6CY37"/>
<dbReference type="KEGG" id="kla:KLLA0_A03465g"/>
<dbReference type="eggNOG" id="KOG1707">
    <property type="taxonomic scope" value="Eukaryota"/>
</dbReference>
<dbReference type="HOGENOM" id="CLU_014255_3_0_1"/>
<dbReference type="InParanoid" id="Q6CY37"/>
<dbReference type="OMA" id="HETTWGI"/>
<dbReference type="Proteomes" id="UP000000598">
    <property type="component" value="Chromosome A"/>
</dbReference>
<dbReference type="GO" id="GO:0005741">
    <property type="term" value="C:mitochondrial outer membrane"/>
    <property type="evidence" value="ECO:0007669"/>
    <property type="project" value="UniProtKB-SubCell"/>
</dbReference>
<dbReference type="GO" id="GO:0005509">
    <property type="term" value="F:calcium ion binding"/>
    <property type="evidence" value="ECO:0007669"/>
    <property type="project" value="InterPro"/>
</dbReference>
<dbReference type="GO" id="GO:0005525">
    <property type="term" value="F:GTP binding"/>
    <property type="evidence" value="ECO:0007669"/>
    <property type="project" value="UniProtKB-KW"/>
</dbReference>
<dbReference type="GO" id="GO:0003924">
    <property type="term" value="F:GTPase activity"/>
    <property type="evidence" value="ECO:0007669"/>
    <property type="project" value="InterPro"/>
</dbReference>
<dbReference type="GO" id="GO:0007005">
    <property type="term" value="P:mitochondrion organization"/>
    <property type="evidence" value="ECO:0007669"/>
    <property type="project" value="InterPro"/>
</dbReference>
<dbReference type="GO" id="GO:0007264">
    <property type="term" value="P:small GTPase-mediated signal transduction"/>
    <property type="evidence" value="ECO:0007669"/>
    <property type="project" value="InterPro"/>
</dbReference>
<dbReference type="CDD" id="cd01892">
    <property type="entry name" value="Miro2"/>
    <property type="match status" value="1"/>
</dbReference>
<dbReference type="FunFam" id="3.40.50.300:FF:000553">
    <property type="entry name" value="Mitochondrial Rho GTPase"/>
    <property type="match status" value="1"/>
</dbReference>
<dbReference type="Gene3D" id="1.10.238.10">
    <property type="entry name" value="EF-hand"/>
    <property type="match status" value="2"/>
</dbReference>
<dbReference type="Gene3D" id="3.40.50.300">
    <property type="entry name" value="P-loop containing nucleotide triphosphate hydrolases"/>
    <property type="match status" value="2"/>
</dbReference>
<dbReference type="InterPro" id="IPR011992">
    <property type="entry name" value="EF-hand-dom_pair"/>
</dbReference>
<dbReference type="InterPro" id="IPR018247">
    <property type="entry name" value="EF_Hand_1_Ca_BS"/>
</dbReference>
<dbReference type="InterPro" id="IPR013566">
    <property type="entry name" value="EF_hand_assoc_1"/>
</dbReference>
<dbReference type="InterPro" id="IPR013567">
    <property type="entry name" value="EF_hand_assoc_2"/>
</dbReference>
<dbReference type="InterPro" id="IPR002048">
    <property type="entry name" value="EF_hand_dom"/>
</dbReference>
<dbReference type="InterPro" id="IPR021181">
    <property type="entry name" value="Miro"/>
</dbReference>
<dbReference type="InterPro" id="IPR020860">
    <property type="entry name" value="MIRO_dom"/>
</dbReference>
<dbReference type="InterPro" id="IPR027417">
    <property type="entry name" value="P-loop_NTPase"/>
</dbReference>
<dbReference type="InterPro" id="IPR001806">
    <property type="entry name" value="Small_GTPase"/>
</dbReference>
<dbReference type="InterPro" id="IPR003578">
    <property type="entry name" value="Small_GTPase_Rho"/>
</dbReference>
<dbReference type="PANTHER" id="PTHR24072">
    <property type="entry name" value="RHO FAMILY GTPASE"/>
    <property type="match status" value="1"/>
</dbReference>
<dbReference type="Pfam" id="PF08355">
    <property type="entry name" value="EF_assoc_1"/>
    <property type="match status" value="1"/>
</dbReference>
<dbReference type="Pfam" id="PF08356">
    <property type="entry name" value="EF_assoc_2"/>
    <property type="match status" value="1"/>
</dbReference>
<dbReference type="Pfam" id="PF00071">
    <property type="entry name" value="Ras"/>
    <property type="match status" value="2"/>
</dbReference>
<dbReference type="PIRSF" id="PIRSF037488">
    <property type="entry name" value="Mt_Rho_GTPase"/>
    <property type="match status" value="1"/>
</dbReference>
<dbReference type="PRINTS" id="PR00449">
    <property type="entry name" value="RASTRNSFRMNG"/>
</dbReference>
<dbReference type="SMART" id="SM00175">
    <property type="entry name" value="RAB"/>
    <property type="match status" value="1"/>
</dbReference>
<dbReference type="SMART" id="SM00173">
    <property type="entry name" value="RAS"/>
    <property type="match status" value="1"/>
</dbReference>
<dbReference type="SMART" id="SM00174">
    <property type="entry name" value="RHO"/>
    <property type="match status" value="1"/>
</dbReference>
<dbReference type="SUPFAM" id="SSF47473">
    <property type="entry name" value="EF-hand"/>
    <property type="match status" value="1"/>
</dbReference>
<dbReference type="SUPFAM" id="SSF52540">
    <property type="entry name" value="P-loop containing nucleoside triphosphate hydrolases"/>
    <property type="match status" value="2"/>
</dbReference>
<dbReference type="PROSITE" id="PS00018">
    <property type="entry name" value="EF_HAND_1"/>
    <property type="match status" value="1"/>
</dbReference>
<dbReference type="PROSITE" id="PS50222">
    <property type="entry name" value="EF_HAND_2"/>
    <property type="match status" value="2"/>
</dbReference>
<dbReference type="PROSITE" id="PS51423">
    <property type="entry name" value="MIRO"/>
    <property type="match status" value="2"/>
</dbReference>
<feature type="chain" id="PRO_0000239337" description="Mitochondrial Rho GTPase 1">
    <location>
        <begin position="1"/>
        <end position="659"/>
    </location>
</feature>
<feature type="topological domain" description="Cytoplasmic" evidence="2">
    <location>
        <begin position="1"/>
        <end position="631"/>
    </location>
</feature>
<feature type="transmembrane region" description="Helical; Anchor for type IV membrane protein" evidence="2">
    <location>
        <begin position="632"/>
        <end position="652"/>
    </location>
</feature>
<feature type="topological domain" description="Mitochondrial intermembrane" evidence="2">
    <location>
        <begin position="653"/>
        <end position="659"/>
    </location>
</feature>
<feature type="domain" description="Miro 1" evidence="4">
    <location>
        <begin position="3"/>
        <end position="183"/>
    </location>
</feature>
<feature type="domain" description="EF-hand 1" evidence="3">
    <location>
        <begin position="199"/>
        <end position="234"/>
    </location>
</feature>
<feature type="domain" description="EF-hand 2" evidence="3">
    <location>
        <begin position="328"/>
        <end position="363"/>
    </location>
</feature>
<feature type="domain" description="Miro 2" evidence="4">
    <location>
        <begin position="444"/>
        <end position="609"/>
    </location>
</feature>
<feature type="binding site" evidence="2">
    <location>
        <begin position="12"/>
        <end position="19"/>
    </location>
    <ligand>
        <name>GTP</name>
        <dbReference type="ChEBI" id="CHEBI:37565"/>
        <label>1</label>
    </ligand>
</feature>
<feature type="binding site" evidence="2">
    <location>
        <begin position="61"/>
        <end position="63"/>
    </location>
    <ligand>
        <name>GTP</name>
        <dbReference type="ChEBI" id="CHEBI:37565"/>
        <label>1</label>
    </ligand>
</feature>
<feature type="binding site" evidence="2">
    <location>
        <begin position="115"/>
        <end position="118"/>
    </location>
    <ligand>
        <name>GTP</name>
        <dbReference type="ChEBI" id="CHEBI:37565"/>
        <label>1</label>
    </ligand>
</feature>
<feature type="binding site" evidence="3">
    <location>
        <position position="212"/>
    </location>
    <ligand>
        <name>Ca(2+)</name>
        <dbReference type="ChEBI" id="CHEBI:29108"/>
        <label>1</label>
    </ligand>
</feature>
<feature type="binding site" evidence="3">
    <location>
        <position position="214"/>
    </location>
    <ligand>
        <name>Ca(2+)</name>
        <dbReference type="ChEBI" id="CHEBI:29108"/>
        <label>1</label>
    </ligand>
</feature>
<feature type="binding site" evidence="3">
    <location>
        <position position="216"/>
    </location>
    <ligand>
        <name>Ca(2+)</name>
        <dbReference type="ChEBI" id="CHEBI:29108"/>
        <label>1</label>
    </ligand>
</feature>
<feature type="binding site" evidence="3">
    <location>
        <position position="223"/>
    </location>
    <ligand>
        <name>Ca(2+)</name>
        <dbReference type="ChEBI" id="CHEBI:29108"/>
        <label>1</label>
    </ligand>
</feature>
<feature type="binding site" evidence="5">
    <location>
        <position position="341"/>
    </location>
    <ligand>
        <name>Ca(2+)</name>
        <dbReference type="ChEBI" id="CHEBI:29108"/>
        <label>2</label>
    </ligand>
</feature>
<feature type="binding site" evidence="5">
    <location>
        <position position="343"/>
    </location>
    <ligand>
        <name>Ca(2+)</name>
        <dbReference type="ChEBI" id="CHEBI:29108"/>
        <label>2</label>
    </ligand>
</feature>
<feature type="binding site" evidence="5">
    <location>
        <position position="345"/>
    </location>
    <ligand>
        <name>Ca(2+)</name>
        <dbReference type="ChEBI" id="CHEBI:29108"/>
        <label>2</label>
    </ligand>
</feature>
<feature type="binding site">
    <location>
        <position position="352"/>
    </location>
    <ligand>
        <name>Ca(2+)</name>
        <dbReference type="ChEBI" id="CHEBI:29108"/>
        <label>2</label>
    </ligand>
</feature>
<feature type="binding site" evidence="2">
    <location>
        <begin position="453"/>
        <end position="460"/>
    </location>
    <ligand>
        <name>GTP</name>
        <dbReference type="ChEBI" id="CHEBI:37565"/>
        <label>2</label>
    </ligand>
</feature>
<feature type="binding site" evidence="2">
    <location>
        <begin position="489"/>
        <end position="493"/>
    </location>
    <ligand>
        <name>GTP</name>
        <dbReference type="ChEBI" id="CHEBI:37565"/>
        <label>2</label>
    </ligand>
</feature>
<feature type="binding site" evidence="2">
    <location>
        <begin position="558"/>
        <end position="561"/>
    </location>
    <ligand>
        <name>GTP</name>
        <dbReference type="ChEBI" id="CHEBI:37565"/>
        <label>2</label>
    </ligand>
</feature>
<proteinExistence type="inferred from homology"/>
<name>GEM1_KLULA</name>
<keyword id="KW-0106">Calcium</keyword>
<keyword id="KW-0342">GTP-binding</keyword>
<keyword id="KW-0378">Hydrolase</keyword>
<keyword id="KW-0472">Membrane</keyword>
<keyword id="KW-0479">Metal-binding</keyword>
<keyword id="KW-0496">Mitochondrion</keyword>
<keyword id="KW-1000">Mitochondrion outer membrane</keyword>
<keyword id="KW-0547">Nucleotide-binding</keyword>
<keyword id="KW-1185">Reference proteome</keyword>
<keyword id="KW-0677">Repeat</keyword>
<keyword id="KW-0812">Transmembrane</keyword>
<keyword id="KW-1133">Transmembrane helix</keyword>
<reference key="1">
    <citation type="journal article" date="2004" name="Nature">
        <title>Genome evolution in yeasts.</title>
        <authorList>
            <person name="Dujon B."/>
            <person name="Sherman D."/>
            <person name="Fischer G."/>
            <person name="Durrens P."/>
            <person name="Casaregola S."/>
            <person name="Lafontaine I."/>
            <person name="de Montigny J."/>
            <person name="Marck C."/>
            <person name="Neuveglise C."/>
            <person name="Talla E."/>
            <person name="Goffard N."/>
            <person name="Frangeul L."/>
            <person name="Aigle M."/>
            <person name="Anthouard V."/>
            <person name="Babour A."/>
            <person name="Barbe V."/>
            <person name="Barnay S."/>
            <person name="Blanchin S."/>
            <person name="Beckerich J.-M."/>
            <person name="Beyne E."/>
            <person name="Bleykasten C."/>
            <person name="Boisrame A."/>
            <person name="Boyer J."/>
            <person name="Cattolico L."/>
            <person name="Confanioleri F."/>
            <person name="de Daruvar A."/>
            <person name="Despons L."/>
            <person name="Fabre E."/>
            <person name="Fairhead C."/>
            <person name="Ferry-Dumazet H."/>
            <person name="Groppi A."/>
            <person name="Hantraye F."/>
            <person name="Hennequin C."/>
            <person name="Jauniaux N."/>
            <person name="Joyet P."/>
            <person name="Kachouri R."/>
            <person name="Kerrest A."/>
            <person name="Koszul R."/>
            <person name="Lemaire M."/>
            <person name="Lesur I."/>
            <person name="Ma L."/>
            <person name="Muller H."/>
            <person name="Nicaud J.-M."/>
            <person name="Nikolski M."/>
            <person name="Oztas S."/>
            <person name="Ozier-Kalogeropoulos O."/>
            <person name="Pellenz S."/>
            <person name="Potier S."/>
            <person name="Richard G.-F."/>
            <person name="Straub M.-L."/>
            <person name="Suleau A."/>
            <person name="Swennen D."/>
            <person name="Tekaia F."/>
            <person name="Wesolowski-Louvel M."/>
            <person name="Westhof E."/>
            <person name="Wirth B."/>
            <person name="Zeniou-Meyer M."/>
            <person name="Zivanovic Y."/>
            <person name="Bolotin-Fukuhara M."/>
            <person name="Thierry A."/>
            <person name="Bouchier C."/>
            <person name="Caudron B."/>
            <person name="Scarpelli C."/>
            <person name="Gaillardin C."/>
            <person name="Weissenbach J."/>
            <person name="Wincker P."/>
            <person name="Souciet J.-L."/>
        </authorList>
    </citation>
    <scope>NUCLEOTIDE SEQUENCE [LARGE SCALE GENOMIC DNA]</scope>
    <source>
        <strain>ATCC 8585 / CBS 2359 / DSM 70799 / NBRC 1267 / NRRL Y-1140 / WM37</strain>
    </source>
</reference>